<reference key="1">
    <citation type="submission" date="2006-03" db="EMBL/GenBank/DDBJ databases">
        <title>Complete sequence of Rhodopseudomonas palustris BisB18.</title>
        <authorList>
            <consortium name="US DOE Joint Genome Institute"/>
            <person name="Copeland A."/>
            <person name="Lucas S."/>
            <person name="Lapidus A."/>
            <person name="Barry K."/>
            <person name="Detter J.C."/>
            <person name="Glavina del Rio T."/>
            <person name="Hammon N."/>
            <person name="Israni S."/>
            <person name="Dalin E."/>
            <person name="Tice H."/>
            <person name="Pitluck S."/>
            <person name="Chain P."/>
            <person name="Malfatti S."/>
            <person name="Shin M."/>
            <person name="Vergez L."/>
            <person name="Schmutz J."/>
            <person name="Larimer F."/>
            <person name="Land M."/>
            <person name="Hauser L."/>
            <person name="Pelletier D.A."/>
            <person name="Kyrpides N."/>
            <person name="Anderson I."/>
            <person name="Oda Y."/>
            <person name="Harwood C.S."/>
            <person name="Richardson P."/>
        </authorList>
    </citation>
    <scope>NUCLEOTIDE SEQUENCE [LARGE SCALE GENOMIC DNA]</scope>
    <source>
        <strain>BisB18</strain>
    </source>
</reference>
<accession>Q215S7</accession>
<evidence type="ECO:0000255" key="1">
    <source>
        <dbReference type="HAMAP-Rule" id="MF_00328"/>
    </source>
</evidence>
<sequence>MTAPGHGLESLERRGLMFVLSSPSGAGKTTLSRLLIERVAGLKMSVSATTRTKRPGEEDGRDYYFVDHARFQAMTENAELLEWANVFDNCYGTPRAPVEAALAVGQDVLFDIDWQGTQQLREKARDDVVSVFILPPSAADLEKRLHTRAQDSDEVIRGRMSRASHELSHFAEYDYIVVNHDIDEAFAEVHSILKAERLKRERRTGLTAFVRDLQKQLER</sequence>
<dbReference type="EC" id="2.7.4.8" evidence="1"/>
<dbReference type="EMBL" id="CP000301">
    <property type="protein sequence ID" value="ABD87859.1"/>
    <property type="molecule type" value="Genomic_DNA"/>
</dbReference>
<dbReference type="SMR" id="Q215S7"/>
<dbReference type="STRING" id="316056.RPC_2305"/>
<dbReference type="KEGG" id="rpc:RPC_2305"/>
<dbReference type="eggNOG" id="COG0194">
    <property type="taxonomic scope" value="Bacteria"/>
</dbReference>
<dbReference type="HOGENOM" id="CLU_001715_1_0_5"/>
<dbReference type="OrthoDB" id="9808150at2"/>
<dbReference type="GO" id="GO:0005829">
    <property type="term" value="C:cytosol"/>
    <property type="evidence" value="ECO:0007669"/>
    <property type="project" value="TreeGrafter"/>
</dbReference>
<dbReference type="GO" id="GO:0005524">
    <property type="term" value="F:ATP binding"/>
    <property type="evidence" value="ECO:0007669"/>
    <property type="project" value="UniProtKB-UniRule"/>
</dbReference>
<dbReference type="GO" id="GO:0004385">
    <property type="term" value="F:guanylate kinase activity"/>
    <property type="evidence" value="ECO:0007669"/>
    <property type="project" value="UniProtKB-UniRule"/>
</dbReference>
<dbReference type="CDD" id="cd00071">
    <property type="entry name" value="GMPK"/>
    <property type="match status" value="1"/>
</dbReference>
<dbReference type="FunFam" id="3.30.63.10:FF:000002">
    <property type="entry name" value="Guanylate kinase 1"/>
    <property type="match status" value="1"/>
</dbReference>
<dbReference type="Gene3D" id="3.30.63.10">
    <property type="entry name" value="Guanylate Kinase phosphate binding domain"/>
    <property type="match status" value="1"/>
</dbReference>
<dbReference type="Gene3D" id="3.40.50.300">
    <property type="entry name" value="P-loop containing nucleotide triphosphate hydrolases"/>
    <property type="match status" value="1"/>
</dbReference>
<dbReference type="HAMAP" id="MF_00328">
    <property type="entry name" value="Guanylate_kinase"/>
    <property type="match status" value="1"/>
</dbReference>
<dbReference type="InterPro" id="IPR008145">
    <property type="entry name" value="GK/Ca_channel_bsu"/>
</dbReference>
<dbReference type="InterPro" id="IPR008144">
    <property type="entry name" value="Guanylate_kin-like_dom"/>
</dbReference>
<dbReference type="InterPro" id="IPR017665">
    <property type="entry name" value="Guanylate_kinase"/>
</dbReference>
<dbReference type="InterPro" id="IPR020590">
    <property type="entry name" value="Guanylate_kinase_CS"/>
</dbReference>
<dbReference type="InterPro" id="IPR027417">
    <property type="entry name" value="P-loop_NTPase"/>
</dbReference>
<dbReference type="NCBIfam" id="TIGR03263">
    <property type="entry name" value="guanyl_kin"/>
    <property type="match status" value="1"/>
</dbReference>
<dbReference type="PANTHER" id="PTHR23117:SF13">
    <property type="entry name" value="GUANYLATE KINASE"/>
    <property type="match status" value="1"/>
</dbReference>
<dbReference type="PANTHER" id="PTHR23117">
    <property type="entry name" value="GUANYLATE KINASE-RELATED"/>
    <property type="match status" value="1"/>
</dbReference>
<dbReference type="Pfam" id="PF00625">
    <property type="entry name" value="Guanylate_kin"/>
    <property type="match status" value="1"/>
</dbReference>
<dbReference type="SMART" id="SM00072">
    <property type="entry name" value="GuKc"/>
    <property type="match status" value="1"/>
</dbReference>
<dbReference type="SUPFAM" id="SSF52540">
    <property type="entry name" value="P-loop containing nucleoside triphosphate hydrolases"/>
    <property type="match status" value="1"/>
</dbReference>
<dbReference type="PROSITE" id="PS00856">
    <property type="entry name" value="GUANYLATE_KINASE_1"/>
    <property type="match status" value="1"/>
</dbReference>
<dbReference type="PROSITE" id="PS50052">
    <property type="entry name" value="GUANYLATE_KINASE_2"/>
    <property type="match status" value="1"/>
</dbReference>
<keyword id="KW-0067">ATP-binding</keyword>
<keyword id="KW-0963">Cytoplasm</keyword>
<keyword id="KW-0418">Kinase</keyword>
<keyword id="KW-0547">Nucleotide-binding</keyword>
<keyword id="KW-0808">Transferase</keyword>
<feature type="chain" id="PRO_0000266384" description="Guanylate kinase">
    <location>
        <begin position="1"/>
        <end position="219"/>
    </location>
</feature>
<feature type="domain" description="Guanylate kinase-like" evidence="1">
    <location>
        <begin position="15"/>
        <end position="194"/>
    </location>
</feature>
<feature type="binding site" evidence="1">
    <location>
        <begin position="22"/>
        <end position="29"/>
    </location>
    <ligand>
        <name>ATP</name>
        <dbReference type="ChEBI" id="CHEBI:30616"/>
    </ligand>
</feature>
<organism>
    <name type="scientific">Rhodopseudomonas palustris (strain BisB18)</name>
    <dbReference type="NCBI Taxonomy" id="316056"/>
    <lineage>
        <taxon>Bacteria</taxon>
        <taxon>Pseudomonadati</taxon>
        <taxon>Pseudomonadota</taxon>
        <taxon>Alphaproteobacteria</taxon>
        <taxon>Hyphomicrobiales</taxon>
        <taxon>Nitrobacteraceae</taxon>
        <taxon>Rhodopseudomonas</taxon>
    </lineage>
</organism>
<name>KGUA_RHOPB</name>
<gene>
    <name evidence="1" type="primary">gmk</name>
    <name type="ordered locus">RPC_2305</name>
</gene>
<comment type="function">
    <text evidence="1">Essential for recycling GMP and indirectly, cGMP.</text>
</comment>
<comment type="catalytic activity">
    <reaction evidence="1">
        <text>GMP + ATP = GDP + ADP</text>
        <dbReference type="Rhea" id="RHEA:20780"/>
        <dbReference type="ChEBI" id="CHEBI:30616"/>
        <dbReference type="ChEBI" id="CHEBI:58115"/>
        <dbReference type="ChEBI" id="CHEBI:58189"/>
        <dbReference type="ChEBI" id="CHEBI:456216"/>
        <dbReference type="EC" id="2.7.4.8"/>
    </reaction>
</comment>
<comment type="subcellular location">
    <subcellularLocation>
        <location evidence="1">Cytoplasm</location>
    </subcellularLocation>
</comment>
<comment type="similarity">
    <text evidence="1">Belongs to the guanylate kinase family.</text>
</comment>
<protein>
    <recommendedName>
        <fullName evidence="1">Guanylate kinase</fullName>
        <ecNumber evidence="1">2.7.4.8</ecNumber>
    </recommendedName>
    <alternativeName>
        <fullName evidence="1">GMP kinase</fullName>
    </alternativeName>
</protein>
<proteinExistence type="inferred from homology"/>